<accession>Q5UBV8</accession>
<accession>Q8K3Y8</accession>
<organism>
    <name type="scientific">Mus musculus</name>
    <name type="common">Mouse</name>
    <dbReference type="NCBI Taxonomy" id="10090"/>
    <lineage>
        <taxon>Eukaryota</taxon>
        <taxon>Metazoa</taxon>
        <taxon>Chordata</taxon>
        <taxon>Craniata</taxon>
        <taxon>Vertebrata</taxon>
        <taxon>Euteleostomi</taxon>
        <taxon>Mammalia</taxon>
        <taxon>Eutheria</taxon>
        <taxon>Euarchontoglires</taxon>
        <taxon>Glires</taxon>
        <taxon>Rodentia</taxon>
        <taxon>Myomorpha</taxon>
        <taxon>Muroidea</taxon>
        <taxon>Muridae</taxon>
        <taxon>Murinae</taxon>
        <taxon>Mus</taxon>
        <taxon>Mus</taxon>
    </lineage>
</organism>
<evidence type="ECO:0000250" key="1"/>
<evidence type="ECO:0000255" key="2"/>
<evidence type="ECO:0000255" key="3">
    <source>
        <dbReference type="PROSITE-ProRule" id="PRU01387"/>
    </source>
</evidence>
<evidence type="ECO:0000269" key="4">
    <source>
    </source>
</evidence>
<evidence type="ECO:0000269" key="5">
    <source>
    </source>
</evidence>
<evidence type="ECO:0000305" key="6"/>
<keyword id="KW-0202">Cytokine</keyword>
<keyword id="KW-1015">Disulfide bond</keyword>
<keyword id="KW-0325">Glycoprotein</keyword>
<keyword id="KW-0472">Membrane</keyword>
<keyword id="KW-1185">Reference proteome</keyword>
<keyword id="KW-0735">Signal-anchor</keyword>
<keyword id="KW-0812">Transmembrane</keyword>
<keyword id="KW-1133">Transmembrane helix</keyword>
<proteinExistence type="evidence at transcript level"/>
<sequence length="252" mass="27723">MAEELGLGFGEGVPVEVLPEGCRHRPEARAGLAARSKACLALTCCLLSFPILAGLSTLLMAGQLRVPGKDCMLRAITEERSEPSPQQVYSPPRGKPRAHLTIKKQTPAPHLKNQLSALHWEHDLGMAFTKNGMKYINKSLVIPESGDYFIYSQITFRGTTSVCGDISRGRRPNKPDSITVVITKVADSYPEPARLLTGSKSVCEISNNWFQSLYLGAMFSLEEGDRLMVNVSDISLVDYTKEDKTFFGAFLL</sequence>
<feature type="chain" id="PRO_0000333232" description="Tumor necrosis factor ligand superfamily member 15">
    <location>
        <begin position="1"/>
        <end position="252"/>
    </location>
</feature>
<feature type="topological domain" description="Cytoplasmic" evidence="2">
    <location>
        <begin position="1"/>
        <end position="39"/>
    </location>
</feature>
<feature type="transmembrane region" description="Helical; Signal-anchor for type II membrane protein" evidence="2">
    <location>
        <begin position="40"/>
        <end position="60"/>
    </location>
</feature>
<feature type="topological domain" description="Extracellular" evidence="2">
    <location>
        <begin position="61"/>
        <end position="252"/>
    </location>
</feature>
<feature type="domain" description="THD" evidence="3">
    <location>
        <begin position="96"/>
        <end position="252"/>
    </location>
</feature>
<feature type="site" description="Important for binding TNFRSF6B" evidence="1">
    <location>
        <position position="188"/>
    </location>
</feature>
<feature type="site" description="Important for binding TNFRSF6B" evidence="1">
    <location>
        <position position="191"/>
    </location>
</feature>
<feature type="glycosylation site" description="N-linked (GlcNAc...) asparagine" evidence="2">
    <location>
        <position position="137"/>
    </location>
</feature>
<feature type="glycosylation site" description="N-linked (GlcNAc...) asparagine" evidence="2">
    <location>
        <position position="230"/>
    </location>
</feature>
<feature type="disulfide bond" evidence="3">
    <location>
        <begin position="163"/>
        <end position="203"/>
    </location>
</feature>
<feature type="sequence conflict" description="In Ref. 2; AAV33431 and 3; AAH96494." evidence="6" ref="2 3">
    <original>V</original>
    <variation>M</variation>
    <location>
        <position position="180"/>
    </location>
</feature>
<feature type="sequence conflict" description="In Ref. 2; AAV33431 and 3; AAH96494." evidence="6" ref="2 3">
    <original>M</original>
    <variation>T</variation>
    <location>
        <position position="218"/>
    </location>
</feature>
<reference key="1">
    <citation type="journal article" date="2002" name="Immunity">
        <title>TL1A is a TNF-like ligand for DR3 and TR6/DcR3 and functions as a T cell costimulator.</title>
        <authorList>
            <person name="Migone T.-S."/>
            <person name="Zhang J."/>
            <person name="Luo X."/>
            <person name="Zhuang L."/>
            <person name="Chen C."/>
            <person name="Hu B."/>
            <person name="Hong J.S."/>
            <person name="Perry J.W."/>
            <person name="Chen S.-F."/>
            <person name="Zhou J.X.H."/>
            <person name="Cho Y.H."/>
            <person name="Ullrich S."/>
            <person name="Kanakaraj P."/>
            <person name="Carrell J."/>
            <person name="Boyd E."/>
            <person name="Olsen H.S."/>
            <person name="Hu G."/>
            <person name="Pukac L."/>
            <person name="Liu D."/>
            <person name="Ni J."/>
            <person name="Kim S."/>
            <person name="Gentz R."/>
            <person name="Feng P."/>
            <person name="Moore P.A."/>
            <person name="Ruben S.M."/>
            <person name="Wei P."/>
        </authorList>
    </citation>
    <scope>NUCLEOTIDE SEQUENCE [MRNA]</scope>
    <scope>FUNCTION</scope>
    <source>
        <strain>BALB/cJ</strain>
        <tissue>Kidney</tissue>
    </source>
</reference>
<reference key="2">
    <citation type="journal article" date="2005" name="Biochem. J.">
        <title>Characterization of cis-regulatory elements of the vascular endothelial growth inhibitor gene promoter.</title>
        <authorList>
            <person name="Xiao Q."/>
            <person name="Hsu C.Y."/>
            <person name="Chen H."/>
            <person name="Ma X."/>
            <person name="Xu J."/>
            <person name="Lee J.-M."/>
        </authorList>
    </citation>
    <scope>NUCLEOTIDE SEQUENCE [MRNA]</scope>
    <scope>INDUCTION</scope>
    <source>
        <strain>C57BL/6J</strain>
    </source>
</reference>
<reference key="3">
    <citation type="journal article" date="2004" name="Genome Res.">
        <title>The status, quality, and expansion of the NIH full-length cDNA project: the Mammalian Gene Collection (MGC).</title>
        <authorList>
            <consortium name="The MGC Project Team"/>
        </authorList>
    </citation>
    <scope>NUCLEOTIDE SEQUENCE [LARGE SCALE MRNA]</scope>
    <source>
        <strain>C3H/He</strain>
        <tissue>Osteoblast</tissue>
    </source>
</reference>
<dbReference type="EMBL" id="AF520786">
    <property type="protein sequence ID" value="AAM77367.1"/>
    <property type="molecule type" value="mRNA"/>
</dbReference>
<dbReference type="EMBL" id="AY764130">
    <property type="protein sequence ID" value="AAV33431.1"/>
    <property type="molecule type" value="mRNA"/>
</dbReference>
<dbReference type="EMBL" id="BC096494">
    <property type="protein sequence ID" value="AAH96494.1"/>
    <property type="molecule type" value="mRNA"/>
</dbReference>
<dbReference type="CCDS" id="CCDS18263.2"/>
<dbReference type="RefSeq" id="NP_796345.3">
    <property type="nucleotide sequence ID" value="NM_177371.3"/>
</dbReference>
<dbReference type="SMR" id="Q5UBV8"/>
<dbReference type="BioGRID" id="236475">
    <property type="interactions" value="1"/>
</dbReference>
<dbReference type="FunCoup" id="Q5UBV8">
    <property type="interactions" value="1063"/>
</dbReference>
<dbReference type="IntAct" id="Q5UBV8">
    <property type="interactions" value="1"/>
</dbReference>
<dbReference type="MINT" id="Q5UBV8"/>
<dbReference type="STRING" id="10090.ENSMUSP00000050144"/>
<dbReference type="GlyCosmos" id="Q5UBV8">
    <property type="glycosylation" value="2 sites, No reported glycans"/>
</dbReference>
<dbReference type="GlyGen" id="Q5UBV8">
    <property type="glycosylation" value="2 sites"/>
</dbReference>
<dbReference type="PaxDb" id="10090-ENSMUSP00000050144"/>
<dbReference type="DNASU" id="326623"/>
<dbReference type="GeneID" id="326623"/>
<dbReference type="KEGG" id="mmu:326623"/>
<dbReference type="AGR" id="MGI:2180140"/>
<dbReference type="CTD" id="9966"/>
<dbReference type="MGI" id="MGI:2180140">
    <property type="gene designation" value="Tnfsf15"/>
</dbReference>
<dbReference type="eggNOG" id="ENOG502S4Q1">
    <property type="taxonomic scope" value="Eukaryota"/>
</dbReference>
<dbReference type="InParanoid" id="Q5UBV8"/>
<dbReference type="OrthoDB" id="9936525at2759"/>
<dbReference type="PhylomeDB" id="Q5UBV8"/>
<dbReference type="Reactome" id="R-MMU-5669034">
    <property type="pathway name" value="TNFs bind their physiological receptors"/>
</dbReference>
<dbReference type="BioGRID-ORCS" id="326623">
    <property type="hits" value="0 hits in 77 CRISPR screens"/>
</dbReference>
<dbReference type="ChiTaRS" id="Tnfsf15">
    <property type="organism name" value="mouse"/>
</dbReference>
<dbReference type="PRO" id="PR:Q5UBV8"/>
<dbReference type="Proteomes" id="UP000000589">
    <property type="component" value="Unplaced"/>
</dbReference>
<dbReference type="RNAct" id="Q5UBV8">
    <property type="molecule type" value="protein"/>
</dbReference>
<dbReference type="GO" id="GO:0005615">
    <property type="term" value="C:extracellular space"/>
    <property type="evidence" value="ECO:0007669"/>
    <property type="project" value="UniProtKB-KW"/>
</dbReference>
<dbReference type="GO" id="GO:0005886">
    <property type="term" value="C:plasma membrane"/>
    <property type="evidence" value="ECO:0000266"/>
    <property type="project" value="MGI"/>
</dbReference>
<dbReference type="GO" id="GO:0005125">
    <property type="term" value="F:cytokine activity"/>
    <property type="evidence" value="ECO:0007669"/>
    <property type="project" value="UniProtKB-KW"/>
</dbReference>
<dbReference type="GO" id="GO:0005164">
    <property type="term" value="F:tumor necrosis factor receptor binding"/>
    <property type="evidence" value="ECO:0007669"/>
    <property type="project" value="InterPro"/>
</dbReference>
<dbReference type="GO" id="GO:0006955">
    <property type="term" value="P:immune response"/>
    <property type="evidence" value="ECO:0007669"/>
    <property type="project" value="InterPro"/>
</dbReference>
<dbReference type="GO" id="GO:0043123">
    <property type="term" value="P:positive regulation of canonical NF-kappaB signal transduction"/>
    <property type="evidence" value="ECO:0000266"/>
    <property type="project" value="MGI"/>
</dbReference>
<dbReference type="CDD" id="cd00184">
    <property type="entry name" value="TNF"/>
    <property type="match status" value="1"/>
</dbReference>
<dbReference type="FunFam" id="2.60.120.40:FF:000018">
    <property type="entry name" value="Tumor necrosis factor ligand superfamily member 15"/>
    <property type="match status" value="1"/>
</dbReference>
<dbReference type="Gene3D" id="2.60.120.40">
    <property type="match status" value="1"/>
</dbReference>
<dbReference type="InterPro" id="IPR006053">
    <property type="entry name" value="TNF"/>
</dbReference>
<dbReference type="InterPro" id="IPR006052">
    <property type="entry name" value="TNF_dom"/>
</dbReference>
<dbReference type="InterPro" id="IPR008983">
    <property type="entry name" value="Tumour_necrosis_fac-like_dom"/>
</dbReference>
<dbReference type="PANTHER" id="PTHR11471">
    <property type="entry name" value="TUMOR NECROSIS FACTOR FAMILY MEMBER"/>
    <property type="match status" value="1"/>
</dbReference>
<dbReference type="PANTHER" id="PTHR11471:SF24">
    <property type="entry name" value="TUMOR NECROSIS FACTOR LIGAND SUPERFAMILY MEMBER 15"/>
    <property type="match status" value="1"/>
</dbReference>
<dbReference type="Pfam" id="PF00229">
    <property type="entry name" value="TNF"/>
    <property type="match status" value="1"/>
</dbReference>
<dbReference type="PRINTS" id="PR01234">
    <property type="entry name" value="TNECROSISFCT"/>
</dbReference>
<dbReference type="SMART" id="SM00207">
    <property type="entry name" value="TNF"/>
    <property type="match status" value="1"/>
</dbReference>
<dbReference type="SUPFAM" id="SSF49842">
    <property type="entry name" value="TNF-like"/>
    <property type="match status" value="1"/>
</dbReference>
<dbReference type="PROSITE" id="PS50049">
    <property type="entry name" value="THD_2"/>
    <property type="match status" value="1"/>
</dbReference>
<gene>
    <name type="primary">Tnfsf15</name>
    <name type="synonym">Tl1</name>
    <name type="synonym">Vegi</name>
</gene>
<name>TNF15_MOUSE</name>
<comment type="function">
    <text evidence="1 4">Receptor for TNFRSF25 and TNFRSF6B. Mediates activation of NF-kappa-B. Inhibits vascular endothelial growth and angiogenesis (in vitro). Promotes activation of caspases and apoptosis (By similarity). Promotes splenocyte alloactivation.</text>
</comment>
<comment type="subunit">
    <text evidence="1">Homotrimer.</text>
</comment>
<comment type="subcellular location">
    <subcellularLocation>
        <location evidence="6">Membrane</location>
        <topology evidence="6">Single-pass type II membrane protein</topology>
    </subcellularLocation>
</comment>
<comment type="induction">
    <text evidence="5">Up-regulated by TNF-alpha.</text>
</comment>
<comment type="similarity">
    <text evidence="6">Belongs to the tumor necrosis factor family.</text>
</comment>
<protein>
    <recommendedName>
        <fullName>Tumor necrosis factor ligand superfamily member 15</fullName>
    </recommendedName>
    <alternativeName>
        <fullName>TNF ligand-related molecule 1</fullName>
    </alternativeName>
    <alternativeName>
        <fullName>Vascular endothelial cell growth inhibitor</fullName>
    </alternativeName>
</protein>